<keyword id="KW-0472">Membrane</keyword>
<keyword id="KW-1185">Reference proteome</keyword>
<keyword id="KW-0812">Transmembrane</keyword>
<keyword id="KW-1133">Transmembrane helix</keyword>
<name>TM101_BOVIN</name>
<feature type="chain" id="PRO_0000240863" description="Transmembrane protein 101">
    <location>
        <begin position="1"/>
        <end position="257"/>
    </location>
</feature>
<feature type="transmembrane region" description="Helical" evidence="2">
    <location>
        <begin position="21"/>
        <end position="40"/>
    </location>
</feature>
<feature type="transmembrane region" description="Helical" evidence="2">
    <location>
        <begin position="52"/>
        <end position="72"/>
    </location>
</feature>
<feature type="transmembrane region" description="Helical" evidence="2">
    <location>
        <begin position="77"/>
        <end position="97"/>
    </location>
</feature>
<feature type="transmembrane region" description="Helical" evidence="2">
    <location>
        <begin position="110"/>
        <end position="130"/>
    </location>
</feature>
<feature type="transmembrane region" description="Helical" evidence="2">
    <location>
        <begin position="139"/>
        <end position="159"/>
    </location>
</feature>
<feature type="transmembrane region" description="Helical" evidence="2">
    <location>
        <begin position="182"/>
        <end position="202"/>
    </location>
</feature>
<feature type="transmembrane region" description="Helical" evidence="2">
    <location>
        <begin position="206"/>
        <end position="226"/>
    </location>
</feature>
<feature type="transmembrane region" description="Helical" evidence="2">
    <location>
        <begin position="233"/>
        <end position="253"/>
    </location>
</feature>
<evidence type="ECO:0000250" key="1"/>
<evidence type="ECO:0000255" key="2"/>
<evidence type="ECO:0000305" key="3"/>
<gene>
    <name type="primary">TMEM101</name>
</gene>
<organism>
    <name type="scientific">Bos taurus</name>
    <name type="common">Bovine</name>
    <dbReference type="NCBI Taxonomy" id="9913"/>
    <lineage>
        <taxon>Eukaryota</taxon>
        <taxon>Metazoa</taxon>
        <taxon>Chordata</taxon>
        <taxon>Craniata</taxon>
        <taxon>Vertebrata</taxon>
        <taxon>Euteleostomi</taxon>
        <taxon>Mammalia</taxon>
        <taxon>Eutheria</taxon>
        <taxon>Laurasiatheria</taxon>
        <taxon>Artiodactyla</taxon>
        <taxon>Ruminantia</taxon>
        <taxon>Pecora</taxon>
        <taxon>Bovidae</taxon>
        <taxon>Bovinae</taxon>
        <taxon>Bos</taxon>
    </lineage>
</organism>
<reference key="1">
    <citation type="submission" date="2006-01" db="EMBL/GenBank/DDBJ databases">
        <authorList>
            <consortium name="NIH - Mammalian Gene Collection (MGC) project"/>
        </authorList>
    </citation>
    <scope>NUCLEOTIDE SEQUENCE [LARGE SCALE MRNA]</scope>
    <source>
        <strain>Hereford</strain>
        <tissue>Hypothalamus</tissue>
    </source>
</reference>
<proteinExistence type="evidence at transcript level"/>
<accession>Q2KIB3</accession>
<protein>
    <recommendedName>
        <fullName>Transmembrane protein 101</fullName>
    </recommendedName>
</protein>
<sequence length="257" mass="28683">MASKTGSRRWMLQLIMQLGSVLLTRCPFWGCFSQLMLYAERAEARRKPDIPVPYLYFDMGAAVLCASFMSFGVKRRWFALGAALQLAISTYAAYVGGYVHYGDWLKVRMYSRTVAIIGGFLVLASGAGELYRRKPRSRSLQSTGQVFLGVYLVCVAYSLQHSKEDRLAYLNHLPGGELMVQLFFVLYGVLALAFLSGYYVTLAAQILAVLLPPVMLLIDGNVAYWHNTRRVEFWNQMKLLGESVGIFGAAVILATDG</sequence>
<dbReference type="EMBL" id="BC112701">
    <property type="protein sequence ID" value="AAI12702.1"/>
    <property type="molecule type" value="mRNA"/>
</dbReference>
<dbReference type="RefSeq" id="NP_001039667.1">
    <property type="nucleotide sequence ID" value="NM_001046202.2"/>
</dbReference>
<dbReference type="FunCoup" id="Q2KIB3">
    <property type="interactions" value="2987"/>
</dbReference>
<dbReference type="STRING" id="9913.ENSBTAP00000066524"/>
<dbReference type="PaxDb" id="9913-ENSBTAP00000021619"/>
<dbReference type="Ensembl" id="ENSBTAT00000021619.4">
    <property type="protein sequence ID" value="ENSBTAP00000021619.3"/>
    <property type="gene ID" value="ENSBTAG00000016251.5"/>
</dbReference>
<dbReference type="GeneID" id="515507"/>
<dbReference type="KEGG" id="bta:515507"/>
<dbReference type="CTD" id="84336"/>
<dbReference type="VEuPathDB" id="HostDB:ENSBTAG00000016251"/>
<dbReference type="VGNC" id="VGNC:35942">
    <property type="gene designation" value="TMEM101"/>
</dbReference>
<dbReference type="eggNOG" id="ENOG502QRKU">
    <property type="taxonomic scope" value="Eukaryota"/>
</dbReference>
<dbReference type="GeneTree" id="ENSGT00390000011938"/>
<dbReference type="HOGENOM" id="CLU_094617_0_0_1"/>
<dbReference type="InParanoid" id="Q2KIB3"/>
<dbReference type="OMA" id="HVEFWNQ"/>
<dbReference type="OrthoDB" id="6082754at2759"/>
<dbReference type="TreeFam" id="TF332810"/>
<dbReference type="Proteomes" id="UP000009136">
    <property type="component" value="Chromosome 19"/>
</dbReference>
<dbReference type="Bgee" id="ENSBTAG00000016251">
    <property type="expression patterns" value="Expressed in retina and 105 other cell types or tissues"/>
</dbReference>
<dbReference type="GO" id="GO:0016020">
    <property type="term" value="C:membrane"/>
    <property type="evidence" value="ECO:0007669"/>
    <property type="project" value="UniProtKB-SubCell"/>
</dbReference>
<dbReference type="InterPro" id="IPR029371">
    <property type="entry name" value="TMEM101"/>
</dbReference>
<dbReference type="PANTHER" id="PTHR31034">
    <property type="entry name" value="TRANSMEMBRANE PROTEIN 101"/>
    <property type="match status" value="1"/>
</dbReference>
<dbReference type="PANTHER" id="PTHR31034:SF2">
    <property type="entry name" value="TRANSMEMBRANE PROTEIN 101"/>
    <property type="match status" value="1"/>
</dbReference>
<dbReference type="Pfam" id="PF15111">
    <property type="entry name" value="TMEM101"/>
    <property type="match status" value="1"/>
</dbReference>
<comment type="function">
    <text evidence="1">May activate NF-kappa-B signaling pathways.</text>
</comment>
<comment type="subcellular location">
    <subcellularLocation>
        <location evidence="3">Membrane</location>
        <topology evidence="3">Multi-pass membrane protein</topology>
    </subcellularLocation>
</comment>